<protein>
    <recommendedName>
        <fullName evidence="2">Purine nucleoside phosphorylase DeoD-type</fullName>
        <shortName evidence="2">PNP</shortName>
        <ecNumber evidence="2">2.4.2.1</ecNumber>
    </recommendedName>
</protein>
<sequence length="238" mass="25891">MSTHIDAPKGAIADVVLLPGDPLRAQYIAENFLDNAQRYNTVRNAFGFTGTFEGRRVSVQATGMGIPSISIYVNELIQDYGVKTLIRVGTAGGMGENVKVRDVVLAQGSSTDSSIILNTFGAGLYFAPLADFNLLREAANLADTSAIRYHVGNVLGEDRFYNDEMDRQKLIDYEVLATEMETPALYLLAAKYHVHALSILTVSNHLVTGEETSAQERQTSFNDMIGLALGVAKTVPDR</sequence>
<feature type="chain" id="PRO_1000186206" description="Purine nucleoside phosphorylase DeoD-type">
    <location>
        <begin position="1"/>
        <end position="238"/>
    </location>
</feature>
<feature type="binding site" evidence="1">
    <location>
        <position position="4"/>
    </location>
    <ligand>
        <name>a purine D-ribonucleoside</name>
        <dbReference type="ChEBI" id="CHEBI:142355"/>
        <note>ligand shared between dimeric partners</note>
    </ligand>
</feature>
<feature type="binding site" description="in other chain" evidence="1">
    <location>
        <position position="20"/>
    </location>
    <ligand>
        <name>phosphate</name>
        <dbReference type="ChEBI" id="CHEBI:43474"/>
        <note>ligand shared between dimeric partners</note>
    </ligand>
</feature>
<feature type="binding site" description="in other chain" evidence="1">
    <location>
        <position position="24"/>
    </location>
    <ligand>
        <name>phosphate</name>
        <dbReference type="ChEBI" id="CHEBI:43474"/>
        <note>ligand shared between dimeric partners</note>
    </ligand>
</feature>
<feature type="binding site" evidence="1">
    <location>
        <position position="43"/>
    </location>
    <ligand>
        <name>phosphate</name>
        <dbReference type="ChEBI" id="CHEBI:43474"/>
        <note>ligand shared between dimeric partners</note>
    </ligand>
</feature>
<feature type="binding site" description="in other chain" evidence="1">
    <location>
        <begin position="87"/>
        <end position="90"/>
    </location>
    <ligand>
        <name>phosphate</name>
        <dbReference type="ChEBI" id="CHEBI:43474"/>
        <note>ligand shared between dimeric partners</note>
    </ligand>
</feature>
<feature type="binding site" description="in other chain" evidence="1">
    <location>
        <begin position="179"/>
        <end position="181"/>
    </location>
    <ligand>
        <name>a purine D-ribonucleoside</name>
        <dbReference type="ChEBI" id="CHEBI:142355"/>
        <note>ligand shared between dimeric partners</note>
    </ligand>
</feature>
<feature type="binding site" description="in other chain" evidence="1">
    <location>
        <begin position="203"/>
        <end position="204"/>
    </location>
    <ligand>
        <name>a purine D-ribonucleoside</name>
        <dbReference type="ChEBI" id="CHEBI:142355"/>
        <note>ligand shared between dimeric partners</note>
    </ligand>
</feature>
<feature type="site" description="Important for catalytic activity" evidence="2">
    <location>
        <position position="217"/>
    </location>
</feature>
<evidence type="ECO:0000250" key="1">
    <source>
        <dbReference type="UniProtKB" id="P50389"/>
    </source>
</evidence>
<evidence type="ECO:0000255" key="2">
    <source>
        <dbReference type="HAMAP-Rule" id="MF_01627"/>
    </source>
</evidence>
<comment type="function">
    <text evidence="2">Catalyzes the reversible phosphorolytic breakdown of the N-glycosidic bond in the beta-(deoxy)ribonucleoside molecules, with the formation of the corresponding free purine bases and pentose-1-phosphate.</text>
</comment>
<comment type="catalytic activity">
    <reaction evidence="2">
        <text>a purine D-ribonucleoside + phosphate = a purine nucleobase + alpha-D-ribose 1-phosphate</text>
        <dbReference type="Rhea" id="RHEA:19805"/>
        <dbReference type="ChEBI" id="CHEBI:26386"/>
        <dbReference type="ChEBI" id="CHEBI:43474"/>
        <dbReference type="ChEBI" id="CHEBI:57720"/>
        <dbReference type="ChEBI" id="CHEBI:142355"/>
        <dbReference type="EC" id="2.4.2.1"/>
    </reaction>
</comment>
<comment type="catalytic activity">
    <reaction evidence="2">
        <text>a purine 2'-deoxy-D-ribonucleoside + phosphate = a purine nucleobase + 2-deoxy-alpha-D-ribose 1-phosphate</text>
        <dbReference type="Rhea" id="RHEA:36431"/>
        <dbReference type="ChEBI" id="CHEBI:26386"/>
        <dbReference type="ChEBI" id="CHEBI:43474"/>
        <dbReference type="ChEBI" id="CHEBI:57259"/>
        <dbReference type="ChEBI" id="CHEBI:142361"/>
        <dbReference type="EC" id="2.4.2.1"/>
    </reaction>
</comment>
<comment type="subunit">
    <text evidence="2">Homohexamer; trimer of homodimers.</text>
</comment>
<comment type="similarity">
    <text evidence="2">Belongs to the PNP/UDP phosphorylase family.</text>
</comment>
<keyword id="KW-0328">Glycosyltransferase</keyword>
<keyword id="KW-1185">Reference proteome</keyword>
<keyword id="KW-0808">Transferase</keyword>
<dbReference type="EC" id="2.4.2.1" evidence="2"/>
<dbReference type="EMBL" id="CP000423">
    <property type="protein sequence ID" value="ABJ69140.1"/>
    <property type="molecule type" value="Genomic_DNA"/>
</dbReference>
<dbReference type="RefSeq" id="WP_003563103.1">
    <property type="nucleotide sequence ID" value="NC_008526.1"/>
</dbReference>
<dbReference type="RefSeq" id="YP_805582.1">
    <property type="nucleotide sequence ID" value="NC_008526.1"/>
</dbReference>
<dbReference type="SMR" id="Q03CD2"/>
<dbReference type="STRING" id="321967.LSEI_0280"/>
<dbReference type="PaxDb" id="321967-LSEI_0280"/>
<dbReference type="KEGG" id="lca:LSEI_0280"/>
<dbReference type="PATRIC" id="fig|321967.11.peg.302"/>
<dbReference type="HOGENOM" id="CLU_068457_2_0_9"/>
<dbReference type="Proteomes" id="UP000001651">
    <property type="component" value="Chromosome"/>
</dbReference>
<dbReference type="GO" id="GO:0005829">
    <property type="term" value="C:cytosol"/>
    <property type="evidence" value="ECO:0007669"/>
    <property type="project" value="TreeGrafter"/>
</dbReference>
<dbReference type="GO" id="GO:0004731">
    <property type="term" value="F:purine-nucleoside phosphorylase activity"/>
    <property type="evidence" value="ECO:0007669"/>
    <property type="project" value="UniProtKB-UniRule"/>
</dbReference>
<dbReference type="GO" id="GO:0006152">
    <property type="term" value="P:purine nucleoside catabolic process"/>
    <property type="evidence" value="ECO:0007669"/>
    <property type="project" value="TreeGrafter"/>
</dbReference>
<dbReference type="CDD" id="cd09006">
    <property type="entry name" value="PNP_EcPNPI-like"/>
    <property type="match status" value="1"/>
</dbReference>
<dbReference type="Gene3D" id="3.40.50.1580">
    <property type="entry name" value="Nucleoside phosphorylase domain"/>
    <property type="match status" value="1"/>
</dbReference>
<dbReference type="HAMAP" id="MF_01627">
    <property type="entry name" value="Pur_nucleosid_phosp"/>
    <property type="match status" value="1"/>
</dbReference>
<dbReference type="InterPro" id="IPR004402">
    <property type="entry name" value="DeoD-type"/>
</dbReference>
<dbReference type="InterPro" id="IPR000845">
    <property type="entry name" value="Nucleoside_phosphorylase_d"/>
</dbReference>
<dbReference type="InterPro" id="IPR035994">
    <property type="entry name" value="Nucleoside_phosphorylase_sf"/>
</dbReference>
<dbReference type="NCBIfam" id="TIGR00107">
    <property type="entry name" value="deoD"/>
    <property type="match status" value="1"/>
</dbReference>
<dbReference type="NCBIfam" id="NF004489">
    <property type="entry name" value="PRK05819.1"/>
    <property type="match status" value="1"/>
</dbReference>
<dbReference type="PANTHER" id="PTHR43691:SF11">
    <property type="entry name" value="FI09636P-RELATED"/>
    <property type="match status" value="1"/>
</dbReference>
<dbReference type="PANTHER" id="PTHR43691">
    <property type="entry name" value="URIDINE PHOSPHORYLASE"/>
    <property type="match status" value="1"/>
</dbReference>
<dbReference type="Pfam" id="PF01048">
    <property type="entry name" value="PNP_UDP_1"/>
    <property type="match status" value="1"/>
</dbReference>
<dbReference type="SUPFAM" id="SSF53167">
    <property type="entry name" value="Purine and uridine phosphorylases"/>
    <property type="match status" value="1"/>
</dbReference>
<reference key="1">
    <citation type="journal article" date="2006" name="Proc. Natl. Acad. Sci. U.S.A.">
        <title>Comparative genomics of the lactic acid bacteria.</title>
        <authorList>
            <person name="Makarova K.S."/>
            <person name="Slesarev A."/>
            <person name="Wolf Y.I."/>
            <person name="Sorokin A."/>
            <person name="Mirkin B."/>
            <person name="Koonin E.V."/>
            <person name="Pavlov A."/>
            <person name="Pavlova N."/>
            <person name="Karamychev V."/>
            <person name="Polouchine N."/>
            <person name="Shakhova V."/>
            <person name="Grigoriev I."/>
            <person name="Lou Y."/>
            <person name="Rohksar D."/>
            <person name="Lucas S."/>
            <person name="Huang K."/>
            <person name="Goodstein D.M."/>
            <person name="Hawkins T."/>
            <person name="Plengvidhya V."/>
            <person name="Welker D."/>
            <person name="Hughes J."/>
            <person name="Goh Y."/>
            <person name="Benson A."/>
            <person name="Baldwin K."/>
            <person name="Lee J.-H."/>
            <person name="Diaz-Muniz I."/>
            <person name="Dosti B."/>
            <person name="Smeianov V."/>
            <person name="Wechter W."/>
            <person name="Barabote R."/>
            <person name="Lorca G."/>
            <person name="Altermann E."/>
            <person name="Barrangou R."/>
            <person name="Ganesan B."/>
            <person name="Xie Y."/>
            <person name="Rawsthorne H."/>
            <person name="Tamir D."/>
            <person name="Parker C."/>
            <person name="Breidt F."/>
            <person name="Broadbent J.R."/>
            <person name="Hutkins R."/>
            <person name="O'Sullivan D."/>
            <person name="Steele J."/>
            <person name="Unlu G."/>
            <person name="Saier M.H. Jr."/>
            <person name="Klaenhammer T."/>
            <person name="Richardson P."/>
            <person name="Kozyavkin S."/>
            <person name="Weimer B.C."/>
            <person name="Mills D.A."/>
        </authorList>
    </citation>
    <scope>NUCLEOTIDE SEQUENCE [LARGE SCALE GENOMIC DNA]</scope>
    <source>
        <strain>ATCC 334 / BCRC 17002 / CCUG 31169 / CIP 107868 / KCTC 3260 / NRRL B-441</strain>
    </source>
</reference>
<name>DEOD_LACP3</name>
<gene>
    <name evidence="2" type="primary">deoD</name>
    <name type="ordered locus">LSEI_0280</name>
</gene>
<organism>
    <name type="scientific">Lacticaseibacillus paracasei (strain ATCC 334 / BCRC 17002 / CCUG 31169 / CIP 107868 / KCTC 3260 / NRRL B-441)</name>
    <name type="common">Lactobacillus paracasei</name>
    <dbReference type="NCBI Taxonomy" id="321967"/>
    <lineage>
        <taxon>Bacteria</taxon>
        <taxon>Bacillati</taxon>
        <taxon>Bacillota</taxon>
        <taxon>Bacilli</taxon>
        <taxon>Lactobacillales</taxon>
        <taxon>Lactobacillaceae</taxon>
        <taxon>Lacticaseibacillus</taxon>
    </lineage>
</organism>
<accession>Q03CD2</accession>
<proteinExistence type="inferred from homology"/>